<dbReference type="EC" id="4.2.3.4" evidence="1"/>
<dbReference type="EMBL" id="CP000140">
    <property type="protein sequence ID" value="ABR44261.1"/>
    <property type="molecule type" value="Genomic_DNA"/>
</dbReference>
<dbReference type="RefSeq" id="WP_005861282.1">
    <property type="nucleotide sequence ID" value="NC_009615.1"/>
</dbReference>
<dbReference type="SMR" id="A6LEZ7"/>
<dbReference type="STRING" id="435591.BDI_2542"/>
<dbReference type="PaxDb" id="435591-BDI_2542"/>
<dbReference type="GeneID" id="93522526"/>
<dbReference type="KEGG" id="pdi:BDI_2542"/>
<dbReference type="eggNOG" id="COG0337">
    <property type="taxonomic scope" value="Bacteria"/>
</dbReference>
<dbReference type="HOGENOM" id="CLU_001201_0_1_10"/>
<dbReference type="BioCyc" id="PDIS435591:G1G5A-2611-MONOMER"/>
<dbReference type="UniPathway" id="UPA00053">
    <property type="reaction ID" value="UER00085"/>
</dbReference>
<dbReference type="Proteomes" id="UP000000566">
    <property type="component" value="Chromosome"/>
</dbReference>
<dbReference type="GO" id="GO:0005737">
    <property type="term" value="C:cytoplasm"/>
    <property type="evidence" value="ECO:0007669"/>
    <property type="project" value="UniProtKB-SubCell"/>
</dbReference>
<dbReference type="GO" id="GO:0003856">
    <property type="term" value="F:3-dehydroquinate synthase activity"/>
    <property type="evidence" value="ECO:0007669"/>
    <property type="project" value="UniProtKB-EC"/>
</dbReference>
<dbReference type="GO" id="GO:0046872">
    <property type="term" value="F:metal ion binding"/>
    <property type="evidence" value="ECO:0007669"/>
    <property type="project" value="UniProtKB-KW"/>
</dbReference>
<dbReference type="GO" id="GO:0000166">
    <property type="term" value="F:nucleotide binding"/>
    <property type="evidence" value="ECO:0007669"/>
    <property type="project" value="UniProtKB-KW"/>
</dbReference>
<dbReference type="GO" id="GO:0008652">
    <property type="term" value="P:amino acid biosynthetic process"/>
    <property type="evidence" value="ECO:0007669"/>
    <property type="project" value="UniProtKB-KW"/>
</dbReference>
<dbReference type="GO" id="GO:0009073">
    <property type="term" value="P:aromatic amino acid family biosynthetic process"/>
    <property type="evidence" value="ECO:0007669"/>
    <property type="project" value="UniProtKB-KW"/>
</dbReference>
<dbReference type="GO" id="GO:0009423">
    <property type="term" value="P:chorismate biosynthetic process"/>
    <property type="evidence" value="ECO:0007669"/>
    <property type="project" value="UniProtKB-UniPathway"/>
</dbReference>
<dbReference type="CDD" id="cd08195">
    <property type="entry name" value="DHQS"/>
    <property type="match status" value="1"/>
</dbReference>
<dbReference type="Gene3D" id="3.40.50.1970">
    <property type="match status" value="1"/>
</dbReference>
<dbReference type="Gene3D" id="1.20.1090.10">
    <property type="entry name" value="Dehydroquinate synthase-like - alpha domain"/>
    <property type="match status" value="1"/>
</dbReference>
<dbReference type="InterPro" id="IPR050071">
    <property type="entry name" value="Dehydroquinate_synthase"/>
</dbReference>
<dbReference type="InterPro" id="IPR016037">
    <property type="entry name" value="DHQ_synth_AroB"/>
</dbReference>
<dbReference type="InterPro" id="IPR030963">
    <property type="entry name" value="DHQ_synth_fam"/>
</dbReference>
<dbReference type="InterPro" id="IPR030960">
    <property type="entry name" value="DHQS/DOIS_N"/>
</dbReference>
<dbReference type="InterPro" id="IPR056179">
    <property type="entry name" value="DHQS_C"/>
</dbReference>
<dbReference type="NCBIfam" id="TIGR01357">
    <property type="entry name" value="aroB"/>
    <property type="match status" value="1"/>
</dbReference>
<dbReference type="PANTHER" id="PTHR43622">
    <property type="entry name" value="3-DEHYDROQUINATE SYNTHASE"/>
    <property type="match status" value="1"/>
</dbReference>
<dbReference type="PANTHER" id="PTHR43622:SF7">
    <property type="entry name" value="3-DEHYDROQUINATE SYNTHASE, CHLOROPLASTIC"/>
    <property type="match status" value="1"/>
</dbReference>
<dbReference type="Pfam" id="PF01761">
    <property type="entry name" value="DHQ_synthase"/>
    <property type="match status" value="1"/>
</dbReference>
<dbReference type="Pfam" id="PF24621">
    <property type="entry name" value="DHQS_C"/>
    <property type="match status" value="1"/>
</dbReference>
<dbReference type="PIRSF" id="PIRSF001455">
    <property type="entry name" value="DHQ_synth"/>
    <property type="match status" value="1"/>
</dbReference>
<dbReference type="SUPFAM" id="SSF56796">
    <property type="entry name" value="Dehydroquinate synthase-like"/>
    <property type="match status" value="1"/>
</dbReference>
<organism>
    <name type="scientific">Parabacteroides distasonis (strain ATCC 8503 / DSM 20701 / CIP 104284 / JCM 5825 / NCTC 11152)</name>
    <dbReference type="NCBI Taxonomy" id="435591"/>
    <lineage>
        <taxon>Bacteria</taxon>
        <taxon>Pseudomonadati</taxon>
        <taxon>Bacteroidota</taxon>
        <taxon>Bacteroidia</taxon>
        <taxon>Bacteroidales</taxon>
        <taxon>Tannerellaceae</taxon>
        <taxon>Parabacteroides</taxon>
    </lineage>
</organism>
<protein>
    <recommendedName>
        <fullName evidence="1">3-dehydroquinate synthase</fullName>
        <shortName evidence="1">DHQS</shortName>
        <ecNumber evidence="1">4.2.3.4</ecNumber>
    </recommendedName>
</protein>
<keyword id="KW-0028">Amino-acid biosynthesis</keyword>
<keyword id="KW-0057">Aromatic amino acid biosynthesis</keyword>
<keyword id="KW-0170">Cobalt</keyword>
<keyword id="KW-0963">Cytoplasm</keyword>
<keyword id="KW-0456">Lyase</keyword>
<keyword id="KW-0479">Metal-binding</keyword>
<keyword id="KW-0520">NAD</keyword>
<keyword id="KW-0547">Nucleotide-binding</keyword>
<keyword id="KW-1185">Reference proteome</keyword>
<keyword id="KW-0862">Zinc</keyword>
<gene>
    <name evidence="1" type="primary">aroB</name>
    <name type="ordered locus">BDI_2542</name>
</gene>
<comment type="function">
    <text evidence="1">Catalyzes the conversion of 3-deoxy-D-arabino-heptulosonate 7-phosphate (DAHP) to dehydroquinate (DHQ).</text>
</comment>
<comment type="catalytic activity">
    <reaction evidence="1">
        <text>7-phospho-2-dehydro-3-deoxy-D-arabino-heptonate = 3-dehydroquinate + phosphate</text>
        <dbReference type="Rhea" id="RHEA:21968"/>
        <dbReference type="ChEBI" id="CHEBI:32364"/>
        <dbReference type="ChEBI" id="CHEBI:43474"/>
        <dbReference type="ChEBI" id="CHEBI:58394"/>
        <dbReference type="EC" id="4.2.3.4"/>
    </reaction>
</comment>
<comment type="cofactor">
    <cofactor evidence="1">
        <name>NAD(+)</name>
        <dbReference type="ChEBI" id="CHEBI:57540"/>
    </cofactor>
</comment>
<comment type="cofactor">
    <cofactor evidence="1">
        <name>Co(2+)</name>
        <dbReference type="ChEBI" id="CHEBI:48828"/>
    </cofactor>
    <cofactor evidence="1">
        <name>Zn(2+)</name>
        <dbReference type="ChEBI" id="CHEBI:29105"/>
    </cofactor>
    <text evidence="1">Binds 1 divalent metal cation per subunit. Can use either Co(2+) or Zn(2+).</text>
</comment>
<comment type="pathway">
    <text evidence="1">Metabolic intermediate biosynthesis; chorismate biosynthesis; chorismate from D-erythrose 4-phosphate and phosphoenolpyruvate: step 2/7.</text>
</comment>
<comment type="subcellular location">
    <subcellularLocation>
        <location evidence="1">Cytoplasm</location>
    </subcellularLocation>
</comment>
<comment type="similarity">
    <text evidence="4">Belongs to the sugar phosphate cyclases superfamily. Dehydroquinate synthase family.</text>
</comment>
<feature type="chain" id="PRO_1000117493" description="3-dehydroquinate synthase">
    <location>
        <begin position="1"/>
        <end position="353"/>
    </location>
</feature>
<feature type="binding site" evidence="2">
    <location>
        <begin position="60"/>
        <end position="65"/>
    </location>
    <ligand>
        <name>NAD(+)</name>
        <dbReference type="ChEBI" id="CHEBI:57540"/>
    </ligand>
</feature>
<feature type="binding site" evidence="2">
    <location>
        <begin position="94"/>
        <end position="98"/>
    </location>
    <ligand>
        <name>NAD(+)</name>
        <dbReference type="ChEBI" id="CHEBI:57540"/>
    </ligand>
</feature>
<feature type="binding site" evidence="2">
    <location>
        <begin position="118"/>
        <end position="119"/>
    </location>
    <ligand>
        <name>NAD(+)</name>
        <dbReference type="ChEBI" id="CHEBI:57540"/>
    </ligand>
</feature>
<feature type="binding site" evidence="2">
    <location>
        <position position="131"/>
    </location>
    <ligand>
        <name>NAD(+)</name>
        <dbReference type="ChEBI" id="CHEBI:57540"/>
    </ligand>
</feature>
<feature type="binding site" evidence="3">
    <location>
        <position position="140"/>
    </location>
    <ligand>
        <name>NAD(+)</name>
        <dbReference type="ChEBI" id="CHEBI:57540"/>
    </ligand>
</feature>
<feature type="binding site" evidence="2">
    <location>
        <position position="173"/>
    </location>
    <ligand>
        <name>Zn(2+)</name>
        <dbReference type="ChEBI" id="CHEBI:29105"/>
    </ligand>
</feature>
<feature type="binding site" evidence="2">
    <location>
        <position position="234"/>
    </location>
    <ligand>
        <name>Zn(2+)</name>
        <dbReference type="ChEBI" id="CHEBI:29105"/>
    </ligand>
</feature>
<feature type="binding site" evidence="2">
    <location>
        <position position="253"/>
    </location>
    <ligand>
        <name>Zn(2+)</name>
        <dbReference type="ChEBI" id="CHEBI:29105"/>
    </ligand>
</feature>
<reference key="1">
    <citation type="journal article" date="2007" name="PLoS Biol.">
        <title>Evolution of symbiotic bacteria in the distal human intestine.</title>
        <authorList>
            <person name="Xu J."/>
            <person name="Mahowald M.A."/>
            <person name="Ley R.E."/>
            <person name="Lozupone C.A."/>
            <person name="Hamady M."/>
            <person name="Martens E.C."/>
            <person name="Henrissat B."/>
            <person name="Coutinho P.M."/>
            <person name="Minx P."/>
            <person name="Latreille P."/>
            <person name="Cordum H."/>
            <person name="Van Brunt A."/>
            <person name="Kim K."/>
            <person name="Fulton R.S."/>
            <person name="Fulton L.A."/>
            <person name="Clifton S.W."/>
            <person name="Wilson R.K."/>
            <person name="Knight R.D."/>
            <person name="Gordon J.I."/>
        </authorList>
    </citation>
    <scope>NUCLEOTIDE SEQUENCE [LARGE SCALE GENOMIC DNA]</scope>
    <source>
        <strain>ATCC 8503 / DSM 20701 / CIP 104284 / JCM 5825 / NCTC 11152</strain>
    </source>
</reference>
<evidence type="ECO:0000250" key="1">
    <source>
        <dbReference type="UniProtKB" id="P07639"/>
    </source>
</evidence>
<evidence type="ECO:0000250" key="2">
    <source>
        <dbReference type="UniProtKB" id="P9WPX9"/>
    </source>
</evidence>
<evidence type="ECO:0000250" key="3">
    <source>
        <dbReference type="UniProtKB" id="Q6GGU4"/>
    </source>
</evidence>
<evidence type="ECO:0000305" key="4"/>
<proteinExistence type="inferred from homology"/>
<name>AROB_PARD8</name>
<sequence>MSEQKVVICKDLKSELQDFLSSLKYDKLFILMDTNTKEKCFPLVEDIPAFQKAPILVMEAGDMNKGFVSLAQIWTALSNEGASRNSLLVNLGGGMITDMGGFAGATFKRGIRTINIPTTLMASVDAAVGGKTGINFNGLKNEVGSFYPPLCVFIDCDFLRTLDRDNILSGYAEMIKHGLISSMENYASVMLFDIDTMNYSYLNSLVGQSVAVKERIVEEDPKEQGIRKALNFGHTIGHAFESLSFLKMRPILHGHAVAAGIVSELYLSHKLCGFPMEKLSQVVYYIKEYYPALFFDCTDYDTLYELMTHDKKNEGGIINFTLLKNVGDVRINQSVTKEKILESLDFYRESFGI</sequence>
<accession>A6LEZ7</accession>